<proteinExistence type="evidence at protein level"/>
<protein>
    <recommendedName>
        <fullName>Hepatic triacylglycerol lipase</fullName>
        <shortName>HL</shortName>
        <shortName>Hepatic lipase</shortName>
        <ecNumber evidence="8 18 21 22">3.1.1.3</ecNumber>
    </recommendedName>
    <alternativeName>
        <fullName>Lipase member C</fullName>
    </alternativeName>
    <alternativeName>
        <fullName>Lysophospholipase</fullName>
        <ecNumber evidence="2">3.1.1.5</ecNumber>
    </alternativeName>
    <alternativeName>
        <fullName>Phospholipase A1</fullName>
        <ecNumber evidence="8 18 21">3.1.1.32</ecNumber>
    </alternativeName>
</protein>
<dbReference type="EC" id="3.1.1.3" evidence="8 18 21 22"/>
<dbReference type="EC" id="3.1.1.5" evidence="2"/>
<dbReference type="EC" id="3.1.1.32" evidence="8 18 21"/>
<dbReference type="EMBL" id="D83548">
    <property type="protein sequence ID" value="BAA12014.1"/>
    <property type="molecule type" value="mRNA"/>
</dbReference>
<dbReference type="EMBL" id="X07228">
    <property type="protein sequence ID" value="CAA30188.1"/>
    <property type="molecule type" value="mRNA"/>
</dbReference>
<dbReference type="EMBL" id="J03540">
    <property type="protein sequence ID" value="AAA59520.1"/>
    <property type="molecule type" value="mRNA"/>
</dbReference>
<dbReference type="EMBL" id="J03895">
    <property type="protein sequence ID" value="AAA61165.1"/>
    <property type="molecule type" value="mRNA"/>
</dbReference>
<dbReference type="EMBL" id="M29194">
    <property type="protein sequence ID" value="AAB60702.1"/>
    <property type="molecule type" value="Genomic_DNA"/>
</dbReference>
<dbReference type="EMBL" id="M29186">
    <property type="protein sequence ID" value="AAB60702.1"/>
    <property type="status" value="JOINED"/>
    <property type="molecule type" value="Genomic_DNA"/>
</dbReference>
<dbReference type="EMBL" id="M29187">
    <property type="protein sequence ID" value="AAB60702.1"/>
    <property type="status" value="JOINED"/>
    <property type="molecule type" value="Genomic_DNA"/>
</dbReference>
<dbReference type="EMBL" id="M29188">
    <property type="protein sequence ID" value="AAB60702.1"/>
    <property type="status" value="JOINED"/>
    <property type="molecule type" value="Genomic_DNA"/>
</dbReference>
<dbReference type="EMBL" id="M29189">
    <property type="protein sequence ID" value="AAB60702.1"/>
    <property type="status" value="JOINED"/>
    <property type="molecule type" value="Genomic_DNA"/>
</dbReference>
<dbReference type="EMBL" id="M29190">
    <property type="protein sequence ID" value="AAB60702.1"/>
    <property type="status" value="JOINED"/>
    <property type="molecule type" value="Genomic_DNA"/>
</dbReference>
<dbReference type="EMBL" id="M29191">
    <property type="protein sequence ID" value="AAB60702.1"/>
    <property type="status" value="JOINED"/>
    <property type="molecule type" value="Genomic_DNA"/>
</dbReference>
<dbReference type="EMBL" id="M29192">
    <property type="protein sequence ID" value="AAB60702.1"/>
    <property type="status" value="JOINED"/>
    <property type="molecule type" value="Genomic_DNA"/>
</dbReference>
<dbReference type="EMBL" id="M29193">
    <property type="protein sequence ID" value="AAB60702.1"/>
    <property type="status" value="JOINED"/>
    <property type="molecule type" value="Genomic_DNA"/>
</dbReference>
<dbReference type="EMBL" id="D83062">
    <property type="protein sequence ID" value="BAA11760.1"/>
    <property type="molecule type" value="Genomic_DNA"/>
</dbReference>
<dbReference type="EMBL" id="M35433">
    <property type="protein sequence ID" value="AAA59521.1"/>
    <property type="molecule type" value="Genomic_DNA"/>
</dbReference>
<dbReference type="EMBL" id="M35425">
    <property type="protein sequence ID" value="AAA59521.1"/>
    <property type="status" value="JOINED"/>
    <property type="molecule type" value="Genomic_DNA"/>
</dbReference>
<dbReference type="EMBL" id="M35426">
    <property type="protein sequence ID" value="AAA59521.1"/>
    <property type="status" value="JOINED"/>
    <property type="molecule type" value="Genomic_DNA"/>
</dbReference>
<dbReference type="EMBL" id="M35427">
    <property type="protein sequence ID" value="AAA59521.1"/>
    <property type="status" value="JOINED"/>
    <property type="molecule type" value="Genomic_DNA"/>
</dbReference>
<dbReference type="EMBL" id="M35429">
    <property type="protein sequence ID" value="AAA59521.1"/>
    <property type="status" value="JOINED"/>
    <property type="molecule type" value="Genomic_DNA"/>
</dbReference>
<dbReference type="EMBL" id="M35430">
    <property type="protein sequence ID" value="AAA59521.1"/>
    <property type="status" value="JOINED"/>
    <property type="molecule type" value="Genomic_DNA"/>
</dbReference>
<dbReference type="EMBL" id="M35431">
    <property type="protein sequence ID" value="AAA59521.1"/>
    <property type="status" value="JOINED"/>
    <property type="molecule type" value="Genomic_DNA"/>
</dbReference>
<dbReference type="EMBL" id="M35432">
    <property type="protein sequence ID" value="AAA59521.1"/>
    <property type="status" value="JOINED"/>
    <property type="molecule type" value="Genomic_DNA"/>
</dbReference>
<dbReference type="EMBL" id="AK292631">
    <property type="protein sequence ID" value="BAF85320.1"/>
    <property type="molecule type" value="mRNA"/>
</dbReference>
<dbReference type="EMBL" id="AK315306">
    <property type="protein sequence ID" value="BAG37710.1"/>
    <property type="molecule type" value="mRNA"/>
</dbReference>
<dbReference type="EMBL" id="AC018904">
    <property type="status" value="NOT_ANNOTATED_CDS"/>
    <property type="molecule type" value="Genomic_DNA"/>
</dbReference>
<dbReference type="EMBL" id="AC084781">
    <property type="status" value="NOT_ANNOTATED_CDS"/>
    <property type="molecule type" value="Genomic_DNA"/>
</dbReference>
<dbReference type="EMBL" id="BC132825">
    <property type="protein sequence ID" value="AAI32826.1"/>
    <property type="molecule type" value="mRNA"/>
</dbReference>
<dbReference type="EMBL" id="BC136495">
    <property type="protein sequence ID" value="AAI36496.1"/>
    <property type="molecule type" value="mRNA"/>
</dbReference>
<dbReference type="EMBL" id="AF037404">
    <property type="protein sequence ID" value="AAC34206.1"/>
    <property type="molecule type" value="Genomic_DNA"/>
</dbReference>
<dbReference type="CCDS" id="CCDS10166.1"/>
<dbReference type="PIR" id="A28997">
    <property type="entry name" value="A28997"/>
</dbReference>
<dbReference type="RefSeq" id="NP_000227.2">
    <property type="nucleotide sequence ID" value="NM_000236.3"/>
</dbReference>
<dbReference type="RefSeq" id="XP_005254429.1">
    <property type="nucleotide sequence ID" value="XM_005254372.1"/>
</dbReference>
<dbReference type="SMR" id="P11150"/>
<dbReference type="BioGRID" id="110178">
    <property type="interactions" value="13"/>
</dbReference>
<dbReference type="FunCoup" id="P11150">
    <property type="interactions" value="199"/>
</dbReference>
<dbReference type="IntAct" id="P11150">
    <property type="interactions" value="5"/>
</dbReference>
<dbReference type="STRING" id="9606.ENSP00000299022"/>
<dbReference type="BindingDB" id="P11150"/>
<dbReference type="ChEMBL" id="CHEMBL2127"/>
<dbReference type="DrugCentral" id="P11150"/>
<dbReference type="SwissLipids" id="SLP:000000569"/>
<dbReference type="ESTHER" id="human-LIPC">
    <property type="family name" value="Hepatic_Lipase"/>
</dbReference>
<dbReference type="GlyCosmos" id="P11150">
    <property type="glycosylation" value="4 sites, No reported glycans"/>
</dbReference>
<dbReference type="GlyGen" id="P11150">
    <property type="glycosylation" value="5 sites, 27 N-linked glycans (2 sites)"/>
</dbReference>
<dbReference type="iPTMnet" id="P11150"/>
<dbReference type="PhosphoSitePlus" id="P11150"/>
<dbReference type="BioMuta" id="LIPC"/>
<dbReference type="DMDM" id="317373430"/>
<dbReference type="jPOST" id="P11150"/>
<dbReference type="MassIVE" id="P11150"/>
<dbReference type="PaxDb" id="9606-ENSP00000299022"/>
<dbReference type="PeptideAtlas" id="P11150"/>
<dbReference type="ProteomicsDB" id="52700"/>
<dbReference type="Antibodypedia" id="4249">
    <property type="antibodies" value="374 antibodies from 30 providers"/>
</dbReference>
<dbReference type="DNASU" id="3990"/>
<dbReference type="Ensembl" id="ENST00000299022.10">
    <property type="protein sequence ID" value="ENSP00000299022.5"/>
    <property type="gene ID" value="ENSG00000166035.11"/>
</dbReference>
<dbReference type="Ensembl" id="ENST00000356113.10">
    <property type="protein sequence ID" value="ENSP00000348425.6"/>
    <property type="gene ID" value="ENSG00000166035.11"/>
</dbReference>
<dbReference type="GeneID" id="3990"/>
<dbReference type="KEGG" id="hsa:3990"/>
<dbReference type="MANE-Select" id="ENST00000299022.10">
    <property type="protein sequence ID" value="ENSP00000299022.5"/>
    <property type="RefSeq nucleotide sequence ID" value="NM_000236.3"/>
    <property type="RefSeq protein sequence ID" value="NP_000227.2"/>
</dbReference>
<dbReference type="UCSC" id="uc002afa.3">
    <property type="organism name" value="human"/>
</dbReference>
<dbReference type="AGR" id="HGNC:6619"/>
<dbReference type="CTD" id="3990"/>
<dbReference type="DisGeNET" id="3990"/>
<dbReference type="GeneCards" id="LIPC"/>
<dbReference type="HGNC" id="HGNC:6619">
    <property type="gene designation" value="LIPC"/>
</dbReference>
<dbReference type="HPA" id="ENSG00000166035">
    <property type="expression patterns" value="Tissue enriched (liver)"/>
</dbReference>
<dbReference type="MalaCards" id="LIPC"/>
<dbReference type="MIM" id="125853">
    <property type="type" value="phenotype"/>
</dbReference>
<dbReference type="MIM" id="151670">
    <property type="type" value="gene"/>
</dbReference>
<dbReference type="MIM" id="612797">
    <property type="type" value="phenotype"/>
</dbReference>
<dbReference type="MIM" id="614025">
    <property type="type" value="phenotype"/>
</dbReference>
<dbReference type="neXtProt" id="NX_P11150"/>
<dbReference type="OpenTargets" id="ENSG00000166035"/>
<dbReference type="Orphanet" id="140905">
    <property type="disease" value="Hyperlipidemia due to hepatic triacylglycerol lipase deficiency"/>
</dbReference>
<dbReference type="PharmGKB" id="PA230"/>
<dbReference type="VEuPathDB" id="HostDB:ENSG00000166035"/>
<dbReference type="eggNOG" id="ENOG502QVTG">
    <property type="taxonomic scope" value="Eukaryota"/>
</dbReference>
<dbReference type="GeneTree" id="ENSGT00940000157602"/>
<dbReference type="InParanoid" id="P11150"/>
<dbReference type="OMA" id="FVRCKED"/>
<dbReference type="OrthoDB" id="199913at2759"/>
<dbReference type="PAN-GO" id="P11150">
    <property type="GO annotations" value="6 GO annotations based on evolutionary models"/>
</dbReference>
<dbReference type="PhylomeDB" id="P11150"/>
<dbReference type="TreeFam" id="TF324997"/>
<dbReference type="PathwayCommons" id="P11150"/>
<dbReference type="Reactome" id="R-HSA-8963889">
    <property type="pathway name" value="Assembly of active LPL and LIPC lipase complexes"/>
</dbReference>
<dbReference type="Reactome" id="R-HSA-8964026">
    <property type="pathway name" value="Chylomicron clearance"/>
</dbReference>
<dbReference type="SignaLink" id="P11150"/>
<dbReference type="BioGRID-ORCS" id="3990">
    <property type="hits" value="6 hits in 1140 CRISPR screens"/>
</dbReference>
<dbReference type="ChiTaRS" id="LIPC">
    <property type="organism name" value="human"/>
</dbReference>
<dbReference type="GeneWiki" id="Hepatic_lipase"/>
<dbReference type="GenomeRNAi" id="3990"/>
<dbReference type="Pharos" id="P11150">
    <property type="development level" value="Tchem"/>
</dbReference>
<dbReference type="PRO" id="PR:P11150"/>
<dbReference type="Proteomes" id="UP000005640">
    <property type="component" value="Chromosome 15"/>
</dbReference>
<dbReference type="RNAct" id="P11150">
    <property type="molecule type" value="protein"/>
</dbReference>
<dbReference type="Bgee" id="ENSG00000166035">
    <property type="expression patterns" value="Expressed in right lobe of liver and 99 other cell types or tissues"/>
</dbReference>
<dbReference type="ExpressionAtlas" id="P11150">
    <property type="expression patterns" value="baseline and differential"/>
</dbReference>
<dbReference type="GO" id="GO:0005788">
    <property type="term" value="C:endoplasmic reticulum lumen"/>
    <property type="evidence" value="ECO:0000304"/>
    <property type="project" value="Reactome"/>
</dbReference>
<dbReference type="GO" id="GO:0005576">
    <property type="term" value="C:extracellular region"/>
    <property type="evidence" value="ECO:0000304"/>
    <property type="project" value="Reactome"/>
</dbReference>
<dbReference type="GO" id="GO:0005615">
    <property type="term" value="C:extracellular space"/>
    <property type="evidence" value="ECO:0000314"/>
    <property type="project" value="BHF-UCL"/>
</dbReference>
<dbReference type="GO" id="GO:0034364">
    <property type="term" value="C:high-density lipoprotein particle"/>
    <property type="evidence" value="ECO:0007669"/>
    <property type="project" value="UniProtKB-KW"/>
</dbReference>
<dbReference type="GO" id="GO:0034185">
    <property type="term" value="F:apolipoprotein binding"/>
    <property type="evidence" value="ECO:0000250"/>
    <property type="project" value="BHF-UCL"/>
</dbReference>
<dbReference type="GO" id="GO:0008201">
    <property type="term" value="F:heparin binding"/>
    <property type="evidence" value="ECO:0007669"/>
    <property type="project" value="UniProtKB-KW"/>
</dbReference>
<dbReference type="GO" id="GO:0004465">
    <property type="term" value="F:lipoprotein lipase activity"/>
    <property type="evidence" value="ECO:0000318"/>
    <property type="project" value="GO_Central"/>
</dbReference>
<dbReference type="GO" id="GO:0030169">
    <property type="term" value="F:low-density lipoprotein particle binding"/>
    <property type="evidence" value="ECO:0000250"/>
    <property type="project" value="BHF-UCL"/>
</dbReference>
<dbReference type="GO" id="GO:0004622">
    <property type="term" value="F:lysophospholipase activity"/>
    <property type="evidence" value="ECO:0007669"/>
    <property type="project" value="UniProtKB-EC"/>
</dbReference>
<dbReference type="GO" id="GO:0008970">
    <property type="term" value="F:phospholipase A1 activity"/>
    <property type="evidence" value="ECO:0000314"/>
    <property type="project" value="UniProtKB"/>
</dbReference>
<dbReference type="GO" id="GO:0004620">
    <property type="term" value="F:phospholipase activity"/>
    <property type="evidence" value="ECO:0000304"/>
    <property type="project" value="BHF-UCL"/>
</dbReference>
<dbReference type="GO" id="GO:0004806">
    <property type="term" value="F:triacylglycerol lipase activity"/>
    <property type="evidence" value="ECO:0000314"/>
    <property type="project" value="UniProtKB"/>
</dbReference>
<dbReference type="GO" id="GO:0042632">
    <property type="term" value="P:cholesterol homeostasis"/>
    <property type="evidence" value="ECO:0000315"/>
    <property type="project" value="BHF-UCL"/>
</dbReference>
<dbReference type="GO" id="GO:0008203">
    <property type="term" value="P:cholesterol metabolic process"/>
    <property type="evidence" value="ECO:0007669"/>
    <property type="project" value="Ensembl"/>
</dbReference>
<dbReference type="GO" id="GO:0034382">
    <property type="term" value="P:chylomicron remnant clearance"/>
    <property type="evidence" value="ECO:0000304"/>
    <property type="project" value="BHF-UCL"/>
</dbReference>
<dbReference type="GO" id="GO:0006633">
    <property type="term" value="P:fatty acid biosynthetic process"/>
    <property type="evidence" value="ECO:0000314"/>
    <property type="project" value="BHF-UCL"/>
</dbReference>
<dbReference type="GO" id="GO:0034375">
    <property type="term" value="P:high-density lipoprotein particle remodeling"/>
    <property type="evidence" value="ECO:0000315"/>
    <property type="project" value="BHF-UCL"/>
</dbReference>
<dbReference type="GO" id="GO:0034373">
    <property type="term" value="P:intermediate-density lipoprotein particle remodeling"/>
    <property type="evidence" value="ECO:0000304"/>
    <property type="project" value="BHF-UCL"/>
</dbReference>
<dbReference type="GO" id="GO:0034374">
    <property type="term" value="P:low-density lipoprotein particle remodeling"/>
    <property type="evidence" value="ECO:0000315"/>
    <property type="project" value="BHF-UCL"/>
</dbReference>
<dbReference type="GO" id="GO:0034638">
    <property type="term" value="P:phosphatidylcholine catabolic process"/>
    <property type="evidence" value="ECO:0000304"/>
    <property type="project" value="BHF-UCL"/>
</dbReference>
<dbReference type="GO" id="GO:0043691">
    <property type="term" value="P:reverse cholesterol transport"/>
    <property type="evidence" value="ECO:0000305"/>
    <property type="project" value="BHF-UCL"/>
</dbReference>
<dbReference type="GO" id="GO:0019433">
    <property type="term" value="P:triglyceride catabolic process"/>
    <property type="evidence" value="ECO:0000314"/>
    <property type="project" value="BHF-UCL"/>
</dbReference>
<dbReference type="GO" id="GO:0070328">
    <property type="term" value="P:triglyceride homeostasis"/>
    <property type="evidence" value="ECO:0000315"/>
    <property type="project" value="BHF-UCL"/>
</dbReference>
<dbReference type="GO" id="GO:0034372">
    <property type="term" value="P:very-low-density lipoprotein particle remodeling"/>
    <property type="evidence" value="ECO:0000314"/>
    <property type="project" value="BHF-UCL"/>
</dbReference>
<dbReference type="CDD" id="cd00707">
    <property type="entry name" value="Pancreat_lipase_like"/>
    <property type="match status" value="1"/>
</dbReference>
<dbReference type="CDD" id="cd01758">
    <property type="entry name" value="PLAT_LPL"/>
    <property type="match status" value="1"/>
</dbReference>
<dbReference type="FunFam" id="3.40.50.1820:FF:000101">
    <property type="entry name" value="Hepatic triacylglycerol lipase"/>
    <property type="match status" value="1"/>
</dbReference>
<dbReference type="FunFam" id="2.60.60.20:FF:000010">
    <property type="entry name" value="hepatic triacylglycerol lipase"/>
    <property type="match status" value="1"/>
</dbReference>
<dbReference type="Gene3D" id="3.40.50.1820">
    <property type="entry name" value="alpha/beta hydrolase"/>
    <property type="match status" value="1"/>
</dbReference>
<dbReference type="Gene3D" id="2.60.60.20">
    <property type="entry name" value="PLAT/LH2 domain"/>
    <property type="match status" value="1"/>
</dbReference>
<dbReference type="InterPro" id="IPR029058">
    <property type="entry name" value="AB_hydrolase_fold"/>
</dbReference>
<dbReference type="InterPro" id="IPR013818">
    <property type="entry name" value="Lipase"/>
</dbReference>
<dbReference type="InterPro" id="IPR002333">
    <property type="entry name" value="Lipase_hep"/>
</dbReference>
<dbReference type="InterPro" id="IPR016272">
    <property type="entry name" value="Lipase_LIPH"/>
</dbReference>
<dbReference type="InterPro" id="IPR033906">
    <property type="entry name" value="Lipase_N"/>
</dbReference>
<dbReference type="InterPro" id="IPR001024">
    <property type="entry name" value="PLAT/LH2_dom"/>
</dbReference>
<dbReference type="InterPro" id="IPR036392">
    <property type="entry name" value="PLAT/LH2_dom_sf"/>
</dbReference>
<dbReference type="InterPro" id="IPR000734">
    <property type="entry name" value="TAG_lipase"/>
</dbReference>
<dbReference type="PANTHER" id="PTHR11610:SF2">
    <property type="entry name" value="HEPATIC TRIACYLGLYCEROL LIPASE"/>
    <property type="match status" value="1"/>
</dbReference>
<dbReference type="PANTHER" id="PTHR11610">
    <property type="entry name" value="LIPASE"/>
    <property type="match status" value="1"/>
</dbReference>
<dbReference type="Pfam" id="PF00151">
    <property type="entry name" value="Lipase"/>
    <property type="match status" value="1"/>
</dbReference>
<dbReference type="Pfam" id="PF01477">
    <property type="entry name" value="PLAT"/>
    <property type="match status" value="1"/>
</dbReference>
<dbReference type="PIRSF" id="PIRSF000865">
    <property type="entry name" value="Lipoprotein_lipase_LIPH"/>
    <property type="match status" value="1"/>
</dbReference>
<dbReference type="PRINTS" id="PR00824">
    <property type="entry name" value="HEPLIPASE"/>
</dbReference>
<dbReference type="PRINTS" id="PR00821">
    <property type="entry name" value="TAGLIPASE"/>
</dbReference>
<dbReference type="SMART" id="SM00308">
    <property type="entry name" value="LH2"/>
    <property type="match status" value="1"/>
</dbReference>
<dbReference type="SUPFAM" id="SSF53474">
    <property type="entry name" value="alpha/beta-Hydrolases"/>
    <property type="match status" value="1"/>
</dbReference>
<dbReference type="SUPFAM" id="SSF49723">
    <property type="entry name" value="Lipase/lipooxygenase domain (PLAT/LH2 domain)"/>
    <property type="match status" value="1"/>
</dbReference>
<dbReference type="PROSITE" id="PS00120">
    <property type="entry name" value="LIPASE_SER"/>
    <property type="match status" value="1"/>
</dbReference>
<dbReference type="PROSITE" id="PS50095">
    <property type="entry name" value="PLAT"/>
    <property type="match status" value="1"/>
</dbReference>
<name>LIPC_HUMAN</name>
<gene>
    <name type="primary">LIPC</name>
    <name type="synonym">HTGL</name>
</gene>
<accession>P11150</accession>
<accession>A2RUB4</accession>
<accession>A8K9B6</accession>
<accession>O43571</accession>
<accession>P78529</accession>
<accession>Q99465</accession>
<comment type="function">
    <text evidence="2 8 18 21 22">Catalyzes the hydrolysis of triglycerides and phospholipids present in circulating plasma lipoproteins, including chylomicrons, intermediate density lipoproteins (IDL), low density lipoproteins (LDL) of large size and high density lipoproteins (HDL), releasing free fatty acids (FFA) and smaller lipoprotein particles (PubMed:12032167, PubMed:26193433, PubMed:7592706, PubMed:8798474). Also exhibits lysophospholipase activity (By similarity). Can hydrolyze both neutral lipid and phospholipid substrates but shows a greater binding affinity for neutral lipid substrates than phospholipid substrates (By similarity). In native LDL, preferentially hydrolyzes the phosphatidylcholine species containing polyunsaturated fatty acids at sn-2 position (PubMed:26193433).</text>
</comment>
<comment type="catalytic activity">
    <reaction evidence="8 18 21 22">
        <text>a triacylglycerol + H2O = a diacylglycerol + a fatty acid + H(+)</text>
        <dbReference type="Rhea" id="RHEA:12044"/>
        <dbReference type="ChEBI" id="CHEBI:15377"/>
        <dbReference type="ChEBI" id="CHEBI:15378"/>
        <dbReference type="ChEBI" id="CHEBI:17855"/>
        <dbReference type="ChEBI" id="CHEBI:18035"/>
        <dbReference type="ChEBI" id="CHEBI:28868"/>
        <dbReference type="EC" id="3.1.1.3"/>
    </reaction>
</comment>
<comment type="catalytic activity">
    <reaction evidence="2">
        <text>a 1-acyl-sn-glycero-3-phosphocholine + H2O = sn-glycerol 3-phosphocholine + a fatty acid + H(+)</text>
        <dbReference type="Rhea" id="RHEA:15177"/>
        <dbReference type="ChEBI" id="CHEBI:15377"/>
        <dbReference type="ChEBI" id="CHEBI:15378"/>
        <dbReference type="ChEBI" id="CHEBI:16870"/>
        <dbReference type="ChEBI" id="CHEBI:28868"/>
        <dbReference type="ChEBI" id="CHEBI:58168"/>
        <dbReference type="EC" id="3.1.1.5"/>
    </reaction>
</comment>
<comment type="catalytic activity">
    <reaction evidence="8 18 21">
        <text>a 1,2-diacyl-sn-glycero-3-phosphocholine + H2O = a 2-acyl-sn-glycero-3-phosphocholine + a fatty acid + H(+)</text>
        <dbReference type="Rhea" id="RHEA:18689"/>
        <dbReference type="ChEBI" id="CHEBI:15377"/>
        <dbReference type="ChEBI" id="CHEBI:15378"/>
        <dbReference type="ChEBI" id="CHEBI:28868"/>
        <dbReference type="ChEBI" id="CHEBI:57643"/>
        <dbReference type="ChEBI" id="CHEBI:57875"/>
        <dbReference type="EC" id="3.1.1.32"/>
    </reaction>
</comment>
<comment type="catalytic activity">
    <reaction evidence="8 21 22">
        <text>1,2,3-tri-(9Z-octadecenoyl)-glycerol + H2O = di-(9Z)-octadecenoylglycerol + (9Z)-octadecenoate + H(+)</text>
        <dbReference type="Rhea" id="RHEA:38575"/>
        <dbReference type="ChEBI" id="CHEBI:15377"/>
        <dbReference type="ChEBI" id="CHEBI:15378"/>
        <dbReference type="ChEBI" id="CHEBI:30823"/>
        <dbReference type="ChEBI" id="CHEBI:53753"/>
        <dbReference type="ChEBI" id="CHEBI:75945"/>
    </reaction>
    <physiologicalReaction direction="left-to-right" evidence="25">
        <dbReference type="Rhea" id="RHEA:38576"/>
    </physiologicalReaction>
</comment>
<comment type="catalytic activity">
    <reaction evidence="21">
        <text>1,2-di-(9Z-octadecenoyl)-sn-glycero-3-phosphocholine + H2O = (9Z-octadecenoyl)-sn-glycero-3-phosphocholine + (9Z)-octadecenoate + H(+)</text>
        <dbReference type="Rhea" id="RHEA:38699"/>
        <dbReference type="ChEBI" id="CHEBI:15377"/>
        <dbReference type="ChEBI" id="CHEBI:15378"/>
        <dbReference type="ChEBI" id="CHEBI:30823"/>
        <dbReference type="ChEBI" id="CHEBI:74669"/>
        <dbReference type="ChEBI" id="CHEBI:76083"/>
    </reaction>
    <physiologicalReaction direction="left-to-right" evidence="25">
        <dbReference type="Rhea" id="RHEA:38700"/>
    </physiologicalReaction>
</comment>
<comment type="catalytic activity">
    <reaction evidence="21">
        <text>1,2,3-tributanoylglycerol + H2O = dibutanoylglycerol + butanoate + H(+)</text>
        <dbReference type="Rhea" id="RHEA:40475"/>
        <dbReference type="ChEBI" id="CHEBI:15377"/>
        <dbReference type="ChEBI" id="CHEBI:15378"/>
        <dbReference type="ChEBI" id="CHEBI:17968"/>
        <dbReference type="ChEBI" id="CHEBI:35020"/>
        <dbReference type="ChEBI" id="CHEBI:76478"/>
    </reaction>
    <physiologicalReaction direction="left-to-right" evidence="25">
        <dbReference type="Rhea" id="RHEA:40476"/>
    </physiologicalReaction>
</comment>
<comment type="catalytic activity">
    <reaction evidence="8">
        <text>1,2-dihexadecanoyl-sn-glycero-3-phosphocholine + H2O = hexadecanoyl-sn-glycero-3-phosphocholine + hexadecanoate + H(+)</text>
        <dbReference type="Rhea" id="RHEA:41384"/>
        <dbReference type="ChEBI" id="CHEBI:7896"/>
        <dbReference type="ChEBI" id="CHEBI:15377"/>
        <dbReference type="ChEBI" id="CHEBI:15378"/>
        <dbReference type="ChEBI" id="CHEBI:64563"/>
        <dbReference type="ChEBI" id="CHEBI:72999"/>
    </reaction>
    <physiologicalReaction direction="left-to-right" evidence="24">
        <dbReference type="Rhea" id="RHEA:41385"/>
    </physiologicalReaction>
</comment>
<comment type="catalytic activity">
    <reaction evidence="2">
        <text>1,2-di-(9Z-octadecenoyl)-sn-glycerol + H2O = 2-(9Z-octadecenoyl)-glycerol + (9Z)-octadecenoate + H(+)</text>
        <dbReference type="Rhea" id="RHEA:38511"/>
        <dbReference type="ChEBI" id="CHEBI:15377"/>
        <dbReference type="ChEBI" id="CHEBI:15378"/>
        <dbReference type="ChEBI" id="CHEBI:30823"/>
        <dbReference type="ChEBI" id="CHEBI:52333"/>
        <dbReference type="ChEBI" id="CHEBI:73990"/>
    </reaction>
    <physiologicalReaction direction="left-to-right" evidence="2">
        <dbReference type="Rhea" id="RHEA:38512"/>
    </physiologicalReaction>
</comment>
<comment type="catalytic activity">
    <reaction evidence="2">
        <text>1,2,3-tri-(9Z-octadecenoyl)-glycerol + H2O = 2,3-di-(9Z)-octadecenoyl-sn-glycerol + (9Z)-octadecenoate + H(+)</text>
        <dbReference type="Rhea" id="RHEA:38391"/>
        <dbReference type="ChEBI" id="CHEBI:15377"/>
        <dbReference type="ChEBI" id="CHEBI:15378"/>
        <dbReference type="ChEBI" id="CHEBI:30823"/>
        <dbReference type="ChEBI" id="CHEBI:53753"/>
        <dbReference type="ChEBI" id="CHEBI:75824"/>
    </reaction>
    <physiologicalReaction direction="left-to-right" evidence="2">
        <dbReference type="Rhea" id="RHEA:38392"/>
    </physiologicalReaction>
</comment>
<comment type="catalytic activity">
    <reaction evidence="2">
        <text>1-(9Z-octadecenoyl)-sn-glycero-3-phospho-L-serine + H2O = sn-glycero-3-phospho-L-serine + (9Z)-octadecenoate + H(+)</text>
        <dbReference type="Rhea" id="RHEA:40499"/>
        <dbReference type="ChEBI" id="CHEBI:15377"/>
        <dbReference type="ChEBI" id="CHEBI:15378"/>
        <dbReference type="ChEBI" id="CHEBI:30823"/>
        <dbReference type="ChEBI" id="CHEBI:64765"/>
        <dbReference type="ChEBI" id="CHEBI:74617"/>
    </reaction>
    <physiologicalReaction direction="left-to-right" evidence="2">
        <dbReference type="Rhea" id="RHEA:40500"/>
    </physiologicalReaction>
</comment>
<comment type="catalytic activity">
    <reaction evidence="2">
        <text>1-hexadecanoyl-sn-glycero-3-phosphocholine + H2O = sn-glycerol 3-phosphocholine + hexadecanoate + H(+)</text>
        <dbReference type="Rhea" id="RHEA:40435"/>
        <dbReference type="ChEBI" id="CHEBI:7896"/>
        <dbReference type="ChEBI" id="CHEBI:15377"/>
        <dbReference type="ChEBI" id="CHEBI:15378"/>
        <dbReference type="ChEBI" id="CHEBI:16870"/>
        <dbReference type="ChEBI" id="CHEBI:72998"/>
    </reaction>
    <physiologicalReaction direction="left-to-right" evidence="2">
        <dbReference type="Rhea" id="RHEA:40436"/>
    </physiologicalReaction>
</comment>
<comment type="catalytic activity">
    <reaction evidence="2">
        <text>1,3-di-(9Z-octadecenoyl)-glycerol + H2O = 3-(9Z-octadecenoyl)-sn-glycerol + (9Z)-octadecenoate + H(+)</text>
        <dbReference type="Rhea" id="RHEA:38651"/>
        <dbReference type="ChEBI" id="CHEBI:15377"/>
        <dbReference type="ChEBI" id="CHEBI:15378"/>
        <dbReference type="ChEBI" id="CHEBI:30823"/>
        <dbReference type="ChEBI" id="CHEBI:75735"/>
        <dbReference type="ChEBI" id="CHEBI:75938"/>
    </reaction>
    <physiologicalReaction direction="left-to-right" evidence="2">
        <dbReference type="Rhea" id="RHEA:38652"/>
    </physiologicalReaction>
</comment>
<comment type="activity regulation">
    <text evidence="18">Phospholipase A1 and triacylglycerol lipase are inhibited by sphingomyelin.</text>
</comment>
<comment type="biophysicochemical properties">
    <kinetics>
        <KM evidence="22">16 mM for 1,2,3-tri-(9Z-octadecenoyl)-glycerol</KM>
        <Vmax evidence="22">1.4 umol/min/ug enzyme with 1,2,3-tri-(9Z-octadecenoyl)-glycerol as substrate</Vmax>
    </kinetics>
</comment>
<comment type="subunit">
    <text evidence="22">Homodimer.</text>
</comment>
<comment type="subcellular location">
    <subcellularLocation>
        <location evidence="19">Secreted</location>
    </subcellularLocation>
</comment>
<comment type="polymorphism">
    <text evidence="14">Genetic variations in LIPC define the high density lipoprotein cholesterol level quantitative trait locus 12 (HDLCQ12) [MIM:612797].</text>
</comment>
<comment type="polymorphism">
    <text evidence="12">Genetic variations in LIPC are associated with susceptibility to type 2 diabetes mellitus (T2D) [MIM:125853].</text>
</comment>
<comment type="disease" evidence="7 10">
    <disease id="DI-01706">
        <name>Hepatic lipase deficiency</name>
        <acronym>HL deficiency</acronym>
        <description>A disorder characterized by elevated levels of beta-migrating very low density lipoproteins, and abnormally triglyceride-rich low and high density lipoproteins.</description>
        <dbReference type="MIM" id="614025"/>
    </disease>
    <text>The disease is caused by variants affecting the gene represented in this entry.</text>
</comment>
<comment type="similarity">
    <text evidence="23">Belongs to the AB hydrolase superfamily. Lipase family.</text>
</comment>
<keyword id="KW-0903">Direct protein sequencing</keyword>
<keyword id="KW-0225">Disease variant</keyword>
<keyword id="KW-0325">Glycoprotein</keyword>
<keyword id="KW-0345">HDL</keyword>
<keyword id="KW-0358">Heparin-binding</keyword>
<keyword id="KW-0378">Hydrolase</keyword>
<keyword id="KW-0442">Lipid degradation</keyword>
<keyword id="KW-0443">Lipid metabolism</keyword>
<keyword id="KW-1267">Proteomics identification</keyword>
<keyword id="KW-1185">Reference proteome</keyword>
<keyword id="KW-0964">Secreted</keyword>
<keyword id="KW-0732">Signal</keyword>
<feature type="signal peptide" evidence="20">
    <location>
        <begin position="1"/>
        <end position="22"/>
    </location>
</feature>
<feature type="chain" id="PRO_0000017769" description="Hepatic triacylglycerol lipase">
    <location>
        <begin position="23"/>
        <end position="499"/>
    </location>
</feature>
<feature type="domain" description="PLAT" evidence="4">
    <location>
        <begin position="352"/>
        <end position="486"/>
    </location>
</feature>
<feature type="region of interest" description="Essential for determining substrate specificity" evidence="21">
    <location>
        <begin position="254"/>
        <end position="277"/>
    </location>
</feature>
<feature type="active site" description="Nucleophile" evidence="1">
    <location>
        <position position="168"/>
    </location>
</feature>
<feature type="active site" description="Charge relay system" evidence="5">
    <location>
        <position position="194"/>
    </location>
</feature>
<feature type="active site" description="Charge relay system" evidence="5">
    <location>
        <position position="279"/>
    </location>
</feature>
<feature type="glycosylation site" description="N-linked (GlcNAc...) asparagine" evidence="3">
    <location>
        <position position="42"/>
    </location>
</feature>
<feature type="glycosylation site" description="N-linked (GlcNAc...) asparagine" evidence="3">
    <location>
        <position position="78"/>
    </location>
</feature>
<feature type="glycosylation site" description="N-linked (GlcNAc...) asparagine" evidence="3">
    <location>
        <position position="362"/>
    </location>
</feature>
<feature type="glycosylation site" description="N-linked (GlcNAc...) asparagine" evidence="3">
    <location>
        <position position="397"/>
    </location>
</feature>
<feature type="sequence variant" id="VAR_004206" description="In dbSNP:rs6078." evidence="6 9">
    <original>V</original>
    <variation>M</variation>
    <location>
        <position position="95"/>
    </location>
</feature>
<feature type="sequence variant" id="VAR_004207" description="In HL deficiency." evidence="7">
    <original>V</original>
    <variation>VHYTVAV</variation>
    <location>
        <position position="134"/>
    </location>
</feature>
<feature type="sequence variant" id="VAR_004208" description="In dbSNP:rs6083." evidence="6 9 11 15 16 19">
    <original>N</original>
    <variation>S</variation>
    <location>
        <position position="215"/>
    </location>
</feature>
<feature type="sequence variant" id="VAR_004209" description="In HL deficiency; dbSNP:rs121912502." evidence="9 10">
    <original>S</original>
    <variation>F</variation>
    <location>
        <position position="289"/>
    </location>
</feature>
<feature type="sequence variant" id="VAR_017024" description="In dbSNP:rs145811475." evidence="9">
    <original>V</original>
    <variation>I</variation>
    <location>
        <position position="342"/>
    </location>
</feature>
<feature type="sequence variant" id="VAR_017025" description="In dbSNP:rs3829462." evidence="9 11 13 15 16 17 19 20">
    <original>F</original>
    <variation>L</variation>
    <location>
        <position position="356"/>
    </location>
</feature>
<feature type="sequence variant" id="VAR_004210" description="In HL deficiency; dbSNP:rs113298164." evidence="9 10">
    <original>T</original>
    <variation>M</variation>
    <location>
        <position position="405"/>
    </location>
</feature>
<feature type="sequence variant" id="VAR_017026" description="In dbSNP:rs142036980." evidence="9">
    <original>D</original>
    <variation>A</variation>
    <location>
        <position position="409"/>
    </location>
</feature>
<feature type="sequence variant" id="VAR_014179" description="In dbSNP:rs6079." evidence="6">
    <original>S</original>
    <variation>N</variation>
    <location>
        <position position="440"/>
    </location>
</feature>
<feature type="mutagenesis site" description="Loss of triglyceride hydrolase and phospholipase activity." evidence="21">
    <original>HFLELYRHIAQHGFNAITQTIK</original>
    <variation>CFHLEYLRIHQAHGFNATIQTKI</variation>
    <location>
        <begin position="255"/>
        <end position="276"/>
    </location>
</feature>
<feature type="mutagenesis site" description="Increased triglyceride hydrolase and reduced phospholipase activity." evidence="21">
    <original>HFLELYRHIAQHGFNAITQTI</original>
    <variation>NIGEAIRVIAERGLGDVDQLV</variation>
    <location>
        <begin position="255"/>
        <end position="275"/>
    </location>
</feature>
<feature type="sequence conflict" description="In Ref. 1; AAA61165." evidence="23" ref="1">
    <original>F</original>
    <variation>S</variation>
    <location>
        <position position="256"/>
    </location>
</feature>
<organism>
    <name type="scientific">Homo sapiens</name>
    <name type="common">Human</name>
    <dbReference type="NCBI Taxonomy" id="9606"/>
    <lineage>
        <taxon>Eukaryota</taxon>
        <taxon>Metazoa</taxon>
        <taxon>Chordata</taxon>
        <taxon>Craniata</taxon>
        <taxon>Vertebrata</taxon>
        <taxon>Euteleostomi</taxon>
        <taxon>Mammalia</taxon>
        <taxon>Eutheria</taxon>
        <taxon>Euarchontoglires</taxon>
        <taxon>Primates</taxon>
        <taxon>Haplorrhini</taxon>
        <taxon>Catarrhini</taxon>
        <taxon>Hominidae</taxon>
        <taxon>Homo</taxon>
    </lineage>
</organism>
<evidence type="ECO:0000250" key="1"/>
<evidence type="ECO:0000250" key="2">
    <source>
        <dbReference type="UniProtKB" id="P07867"/>
    </source>
</evidence>
<evidence type="ECO:0000255" key="3"/>
<evidence type="ECO:0000255" key="4">
    <source>
        <dbReference type="PROSITE-ProRule" id="PRU00152"/>
    </source>
</evidence>
<evidence type="ECO:0000255" key="5">
    <source>
        <dbReference type="PROSITE-ProRule" id="PRU10037"/>
    </source>
</evidence>
<evidence type="ECO:0000269" key="6">
    <source>
    </source>
</evidence>
<evidence type="ECO:0000269" key="7">
    <source>
    </source>
</evidence>
<evidence type="ECO:0000269" key="8">
    <source>
    </source>
</evidence>
<evidence type="ECO:0000269" key="9">
    <source>
    </source>
</evidence>
<evidence type="ECO:0000269" key="10">
    <source>
    </source>
</evidence>
<evidence type="ECO:0000269" key="11">
    <source>
    </source>
</evidence>
<evidence type="ECO:0000269" key="12">
    <source>
    </source>
</evidence>
<evidence type="ECO:0000269" key="13">
    <source>
    </source>
</evidence>
<evidence type="ECO:0000269" key="14">
    <source>
    </source>
</evidence>
<evidence type="ECO:0000269" key="15">
    <source>
    </source>
</evidence>
<evidence type="ECO:0000269" key="16">
    <source>
    </source>
</evidence>
<evidence type="ECO:0000269" key="17">
    <source>
    </source>
</evidence>
<evidence type="ECO:0000269" key="18">
    <source>
    </source>
</evidence>
<evidence type="ECO:0000269" key="19">
    <source>
    </source>
</evidence>
<evidence type="ECO:0000269" key="20">
    <source>
    </source>
</evidence>
<evidence type="ECO:0000269" key="21">
    <source>
    </source>
</evidence>
<evidence type="ECO:0000269" key="22">
    <source>
    </source>
</evidence>
<evidence type="ECO:0000305" key="23"/>
<evidence type="ECO:0000305" key="24">
    <source>
    </source>
</evidence>
<evidence type="ECO:0000305" key="25">
    <source>
    </source>
</evidence>
<reference key="1">
    <citation type="journal article" date="1987" name="Differentiation">
        <title>Human hepatic triglyceride lipase: cDNA cloning, amino acid sequence and expression in a cultured cell line.</title>
        <authorList>
            <person name="Stahnke G."/>
            <person name="Sprengel R."/>
            <person name="Augustin J."/>
            <person name="Will H."/>
        </authorList>
    </citation>
    <scope>NUCLEOTIDE SEQUENCE [MRNA]</scope>
    <scope>SUBCELLULAR LOCATION</scope>
    <scope>VARIANTS SER-215 AND LEU-356</scope>
    <source>
        <tissue>Liver</tissue>
    </source>
</reference>
<reference key="2">
    <citation type="journal article" date="1988" name="J. Biol. Chem.">
        <title>Human hepatic lipase. Cloned cDNA sequence, restriction fragment length polymorphisms, chromosomal localization, and evolutionary relationships with lipoprotein lipase and pancreatic lipase.</title>
        <authorList>
            <person name="Datta S."/>
            <person name="Luo C.C."/>
            <person name="Li W.H."/>
            <person name="VanTuinen P."/>
            <person name="Ledbetter D.H."/>
            <person name="Brown M.A."/>
            <person name="Chen S.H."/>
            <person name="Liu S."/>
            <person name="Chan L."/>
        </authorList>
    </citation>
    <scope>NUCLEOTIDE SEQUENCE [MRNA]</scope>
    <scope>VARIANTS SER-215 AND LEU-356</scope>
    <source>
        <tissue>Liver</tissue>
    </source>
</reference>
<reference key="3">
    <citation type="journal article" date="1988" name="J. Biol. Chem.">
        <title>Isolation and cDNA sequence of human postheparin plasma hepatic triglyceride lipase.</title>
        <authorList>
            <person name="Martin G.A."/>
            <person name="Busch S.J."/>
            <person name="Meredith G.D."/>
            <person name="Cardin A.D."/>
            <person name="Blankenship D.T."/>
            <person name="Mao S.J.T."/>
            <person name="Rechtin A.E."/>
            <person name="Woods C.W."/>
            <person name="Racke M.M."/>
            <person name="Schafer M.P."/>
            <person name="Fitzgerald M.C."/>
            <person name="Burke D.M."/>
            <person name="Flanagan M.A."/>
            <person name="Jackson R.L."/>
        </authorList>
    </citation>
    <scope>NUCLEOTIDE SEQUENCE [MRNA]</scope>
    <scope>PROTEIN SEQUENCE OF N-TERMINUS</scope>
    <scope>PARTIAL PROTEIN SEQUENCE</scope>
    <scope>VARIANT LEU-356</scope>
    <source>
        <tissue>Liver</tissue>
    </source>
</reference>
<reference key="4">
    <citation type="journal article" date="1989" name="Biochemistry">
        <title>Structure of the human hepatic triglyceride lipase gene.</title>
        <authorList>
            <person name="Cai S.J."/>
            <person name="Wong D.M."/>
            <person name="Chen S.H."/>
            <person name="Chan L."/>
        </authorList>
    </citation>
    <scope>NUCLEOTIDE SEQUENCE [GENOMIC DNA]</scope>
    <scope>VARIANT LEU-356</scope>
</reference>
<reference key="5">
    <citation type="journal article" date="1990" name="J. Biol. Chem.">
        <title>Isolation and characterization of the human hepatic lipase gene.</title>
        <authorList>
            <person name="Ameis D."/>
            <person name="Stahnke G."/>
            <person name="Kobayashi J."/>
            <person name="McLean J."/>
            <person name="Lee G."/>
            <person name="Buscher M."/>
            <person name="Schotz M.C."/>
            <person name="Will H."/>
        </authorList>
    </citation>
    <scope>NUCLEOTIDE SEQUENCE [GENOMIC DNA]</scope>
    <scope>VARIANTS SER-215 AND LEU-356</scope>
</reference>
<reference key="6">
    <citation type="journal article" date="2004" name="Nat. Genet.">
        <title>Complete sequencing and characterization of 21,243 full-length human cDNAs.</title>
        <authorList>
            <person name="Ota T."/>
            <person name="Suzuki Y."/>
            <person name="Nishikawa T."/>
            <person name="Otsuki T."/>
            <person name="Sugiyama T."/>
            <person name="Irie R."/>
            <person name="Wakamatsu A."/>
            <person name="Hayashi K."/>
            <person name="Sato H."/>
            <person name="Nagai K."/>
            <person name="Kimura K."/>
            <person name="Makita H."/>
            <person name="Sekine M."/>
            <person name="Obayashi M."/>
            <person name="Nishi T."/>
            <person name="Shibahara T."/>
            <person name="Tanaka T."/>
            <person name="Ishii S."/>
            <person name="Yamamoto J."/>
            <person name="Saito K."/>
            <person name="Kawai Y."/>
            <person name="Isono Y."/>
            <person name="Nakamura Y."/>
            <person name="Nagahari K."/>
            <person name="Murakami K."/>
            <person name="Yasuda T."/>
            <person name="Iwayanagi T."/>
            <person name="Wagatsuma M."/>
            <person name="Shiratori A."/>
            <person name="Sudo H."/>
            <person name="Hosoiri T."/>
            <person name="Kaku Y."/>
            <person name="Kodaira H."/>
            <person name="Kondo H."/>
            <person name="Sugawara M."/>
            <person name="Takahashi M."/>
            <person name="Kanda K."/>
            <person name="Yokoi T."/>
            <person name="Furuya T."/>
            <person name="Kikkawa E."/>
            <person name="Omura Y."/>
            <person name="Abe K."/>
            <person name="Kamihara K."/>
            <person name="Katsuta N."/>
            <person name="Sato K."/>
            <person name="Tanikawa M."/>
            <person name="Yamazaki M."/>
            <person name="Ninomiya K."/>
            <person name="Ishibashi T."/>
            <person name="Yamashita H."/>
            <person name="Murakawa K."/>
            <person name="Fujimori K."/>
            <person name="Tanai H."/>
            <person name="Kimata M."/>
            <person name="Watanabe M."/>
            <person name="Hiraoka S."/>
            <person name="Chiba Y."/>
            <person name="Ishida S."/>
            <person name="Ono Y."/>
            <person name="Takiguchi S."/>
            <person name="Watanabe S."/>
            <person name="Yosida M."/>
            <person name="Hotuta T."/>
            <person name="Kusano J."/>
            <person name="Kanehori K."/>
            <person name="Takahashi-Fujii A."/>
            <person name="Hara H."/>
            <person name="Tanase T.-O."/>
            <person name="Nomura Y."/>
            <person name="Togiya S."/>
            <person name="Komai F."/>
            <person name="Hara R."/>
            <person name="Takeuchi K."/>
            <person name="Arita M."/>
            <person name="Imose N."/>
            <person name="Musashino K."/>
            <person name="Yuuki H."/>
            <person name="Oshima A."/>
            <person name="Sasaki N."/>
            <person name="Aotsuka S."/>
            <person name="Yoshikawa Y."/>
            <person name="Matsunawa H."/>
            <person name="Ichihara T."/>
            <person name="Shiohata N."/>
            <person name="Sano S."/>
            <person name="Moriya S."/>
            <person name="Momiyama H."/>
            <person name="Satoh N."/>
            <person name="Takami S."/>
            <person name="Terashima Y."/>
            <person name="Suzuki O."/>
            <person name="Nakagawa S."/>
            <person name="Senoh A."/>
            <person name="Mizoguchi H."/>
            <person name="Goto Y."/>
            <person name="Shimizu F."/>
            <person name="Wakebe H."/>
            <person name="Hishigaki H."/>
            <person name="Watanabe T."/>
            <person name="Sugiyama A."/>
            <person name="Takemoto M."/>
            <person name="Kawakami B."/>
            <person name="Yamazaki M."/>
            <person name="Watanabe K."/>
            <person name="Kumagai A."/>
            <person name="Itakura S."/>
            <person name="Fukuzumi Y."/>
            <person name="Fujimori Y."/>
            <person name="Komiyama M."/>
            <person name="Tashiro H."/>
            <person name="Tanigami A."/>
            <person name="Fujiwara T."/>
            <person name="Ono T."/>
            <person name="Yamada K."/>
            <person name="Fujii Y."/>
            <person name="Ozaki K."/>
            <person name="Hirao M."/>
            <person name="Ohmori Y."/>
            <person name="Kawabata A."/>
            <person name="Hikiji T."/>
            <person name="Kobatake N."/>
            <person name="Inagaki H."/>
            <person name="Ikema Y."/>
            <person name="Okamoto S."/>
            <person name="Okitani R."/>
            <person name="Kawakami T."/>
            <person name="Noguchi S."/>
            <person name="Itoh T."/>
            <person name="Shigeta K."/>
            <person name="Senba T."/>
            <person name="Matsumura K."/>
            <person name="Nakajima Y."/>
            <person name="Mizuno T."/>
            <person name="Morinaga M."/>
            <person name="Sasaki M."/>
            <person name="Togashi T."/>
            <person name="Oyama M."/>
            <person name="Hata H."/>
            <person name="Watanabe M."/>
            <person name="Komatsu T."/>
            <person name="Mizushima-Sugano J."/>
            <person name="Satoh T."/>
            <person name="Shirai Y."/>
            <person name="Takahashi Y."/>
            <person name="Nakagawa K."/>
            <person name="Okumura K."/>
            <person name="Nagase T."/>
            <person name="Nomura N."/>
            <person name="Kikuchi H."/>
            <person name="Masuho Y."/>
            <person name="Yamashita R."/>
            <person name="Nakai K."/>
            <person name="Yada T."/>
            <person name="Nakamura Y."/>
            <person name="Ohara O."/>
            <person name="Isogai T."/>
            <person name="Sugano S."/>
        </authorList>
    </citation>
    <scope>NUCLEOTIDE SEQUENCE [LARGE SCALE MRNA]</scope>
    <scope>VARIANTS SER-215 AND LEU-356</scope>
    <source>
        <tissue>Kidney</tissue>
        <tissue>Thymus</tissue>
    </source>
</reference>
<reference key="7">
    <citation type="journal article" date="2006" name="Nature">
        <title>Analysis of the DNA sequence and duplication history of human chromosome 15.</title>
        <authorList>
            <person name="Zody M.C."/>
            <person name="Garber M."/>
            <person name="Sharpe T."/>
            <person name="Young S.K."/>
            <person name="Rowen L."/>
            <person name="O'Neill K."/>
            <person name="Whittaker C.A."/>
            <person name="Kamal M."/>
            <person name="Chang J.L."/>
            <person name="Cuomo C.A."/>
            <person name="Dewar K."/>
            <person name="FitzGerald M.G."/>
            <person name="Kodira C.D."/>
            <person name="Madan A."/>
            <person name="Qin S."/>
            <person name="Yang X."/>
            <person name="Abbasi N."/>
            <person name="Abouelleil A."/>
            <person name="Arachchi H.M."/>
            <person name="Baradarani L."/>
            <person name="Birditt B."/>
            <person name="Bloom S."/>
            <person name="Bloom T."/>
            <person name="Borowsky M.L."/>
            <person name="Burke J."/>
            <person name="Butler J."/>
            <person name="Cook A."/>
            <person name="DeArellano K."/>
            <person name="DeCaprio D."/>
            <person name="Dorris L. III"/>
            <person name="Dors M."/>
            <person name="Eichler E.E."/>
            <person name="Engels R."/>
            <person name="Fahey J."/>
            <person name="Fleetwood P."/>
            <person name="Friedman C."/>
            <person name="Gearin G."/>
            <person name="Hall J.L."/>
            <person name="Hensley G."/>
            <person name="Johnson E."/>
            <person name="Jones C."/>
            <person name="Kamat A."/>
            <person name="Kaur A."/>
            <person name="Locke D.P."/>
            <person name="Madan A."/>
            <person name="Munson G."/>
            <person name="Jaffe D.B."/>
            <person name="Lui A."/>
            <person name="Macdonald P."/>
            <person name="Mauceli E."/>
            <person name="Naylor J.W."/>
            <person name="Nesbitt R."/>
            <person name="Nicol R."/>
            <person name="O'Leary S.B."/>
            <person name="Ratcliffe A."/>
            <person name="Rounsley S."/>
            <person name="She X."/>
            <person name="Sneddon K.M.B."/>
            <person name="Stewart S."/>
            <person name="Sougnez C."/>
            <person name="Stone S.M."/>
            <person name="Topham K."/>
            <person name="Vincent D."/>
            <person name="Wang S."/>
            <person name="Zimmer A.R."/>
            <person name="Birren B.W."/>
            <person name="Hood L."/>
            <person name="Lander E.S."/>
            <person name="Nusbaum C."/>
        </authorList>
    </citation>
    <scope>NUCLEOTIDE SEQUENCE [LARGE SCALE GENOMIC DNA]</scope>
</reference>
<reference key="8">
    <citation type="journal article" date="2004" name="Genome Res.">
        <title>The status, quality, and expansion of the NIH full-length cDNA project: the Mammalian Gene Collection (MGC).</title>
        <authorList>
            <consortium name="The MGC Project Team"/>
        </authorList>
    </citation>
    <scope>NUCLEOTIDE SEQUENCE [LARGE SCALE MRNA]</scope>
    <scope>VARIANT LEU-356</scope>
</reference>
<reference key="9">
    <citation type="journal article" date="1998" name="Hum. Mutat.">
        <title>18 bp insertion/duplication with internal missense mutation in human hepatic lipase gene exon 3.</title>
        <authorList>
            <person name="Tiebel O."/>
            <person name="Gehrisch S."/>
            <person name="Pietzsch J."/>
            <person name="Gromeier S."/>
            <person name="Jaross W."/>
        </authorList>
    </citation>
    <scope>NUCLEOTIDE SEQUENCE [GENOMIC DNA] OF 92-152</scope>
    <scope>VARIANT HL DEFICIENCY HIS-TYR-THR-VAL-ALA-VAL-134 INS</scope>
</reference>
<reference key="10">
    <citation type="journal article" date="1996" name="Mol. Cell. Probes">
        <title>Identification of a BstNI polymorphism in exon 9 of the human hepatic triglyceride lipase gene.</title>
        <authorList>
            <person name="Takagi A."/>
            <person name="Ikeda Y."/>
            <person name="Mori A."/>
            <person name="Ashida Y."/>
            <person name="Yamamoto A."/>
        </authorList>
    </citation>
    <scope>NUCLEOTIDE SEQUENCE [MRNA] OF 464-499</scope>
</reference>
<reference key="11">
    <citation type="journal article" date="1995" name="J. Biol. Chem.">
        <title>Human hepatic and lipoprotein lipase: the loop covering the catalytic site mediates lipase substrate specificity.</title>
        <authorList>
            <person name="Dugi K.A."/>
            <person name="Dichek H.L."/>
            <person name="Santamarina-Fojo S."/>
        </authorList>
    </citation>
    <scope>FUNCTION</scope>
    <scope>CATALYTIC ACTIVITY</scope>
    <scope>REGION</scope>
    <scope>MUTAGENESIS OF 255-HIS--ILE-275 AND 255-HIS--LYS-276</scope>
</reference>
<reference key="12">
    <citation type="journal article" date="1996" name="J. Biol. Chem.">
        <title>Human hepatic lipase subunit structure determination.</title>
        <authorList>
            <person name="Hill J.S."/>
            <person name="Davis R.C."/>
            <person name="Yang D."/>
            <person name="Wen J."/>
            <person name="Philo J.S."/>
            <person name="Poon P.H."/>
            <person name="Phillips M.L."/>
            <person name="Kempner E.S."/>
            <person name="Wong H."/>
        </authorList>
    </citation>
    <scope>FUNCTION</scope>
    <scope>CATALYTIC ACTIVITY</scope>
    <scope>SUBUNIT</scope>
    <scope>BIOPHYSICOCHEMICAL PROPERTIES</scope>
</reference>
<reference key="13">
    <citation type="journal article" date="2004" name="J. Clin. Endocrinol. Metab.">
        <title>The G-250A promoter polymorphism of the hepatic lipase gene predicts the conversion from impaired glucose tolerance to type 2 diabetes mellitus: the Finnish diabetes prevention study.</title>
        <authorList>
            <person name="Todorova B."/>
            <person name="Kubaszek A."/>
            <person name="Pihlajamaki J."/>
            <person name="Lindstrom J."/>
            <person name="Eriksson J."/>
            <person name="Valle T.T."/>
            <person name="Hamalainen H."/>
            <person name="Ilanne-Parikka P."/>
            <person name="Keinanen-Kiukaanniemi S."/>
            <person name="Tuomilehto J."/>
            <person name="Uusitupa M."/>
            <person name="Laakso M."/>
        </authorList>
    </citation>
    <scope>ASSOCIATION WITH T2D SUSCEPTIBILITY</scope>
</reference>
<reference key="14">
    <citation type="journal article" date="2002" name="J. Lipid Res.">
        <title>Characterization of the lipolytic activity of endothelial lipase.</title>
        <authorList>
            <person name="McCoy M.G."/>
            <person name="Sun G.-S."/>
            <person name="Marchadier D."/>
            <person name="Maugeais C."/>
            <person name="Glick J.M."/>
            <person name="Rader D.J."/>
        </authorList>
    </citation>
    <scope>FUNCTION</scope>
    <scope>CATALYTIC ACTIVITY</scope>
</reference>
<reference key="15">
    <citation type="journal article" date="2015" name="Biochim. Biophys. Acta">
        <title>Regulation of hepatic lipase activity by sphingomyelin in plasma lipoproteins.</title>
        <authorList>
            <person name="Yang P."/>
            <person name="Subbaiah P.V."/>
        </authorList>
    </citation>
    <scope>FUNCTION</scope>
    <scope>CATALYTIC ACTIVITY</scope>
    <scope>ACTIVITY REGULATION</scope>
</reference>
<reference key="16">
    <citation type="journal article" date="2008" name="J. Clin. Endocrinol. Metab.">
        <title>The -250G&gt;A promoter variant in hepatic lipase associates with elevated fasting serum high-density lipoprotein cholesterol modulated by interaction with physical activity in a study of 16,156 Danish subjects.</title>
        <authorList>
            <person name="Grarup N."/>
            <person name="Andreasen C.H."/>
            <person name="Andersen M.K."/>
            <person name="Albrechtsen A."/>
            <person name="Sandbaek A."/>
            <person name="Lauritzen T."/>
            <person name="Borch-Johnsen K."/>
            <person name="Jorgensen T."/>
            <person name="Schmitz O."/>
            <person name="Hansen T."/>
            <person name="Pedersen O."/>
        </authorList>
    </citation>
    <scope>INVOLVEMENT IN HDLCQ12</scope>
</reference>
<reference key="17">
    <citation type="journal article" date="2014" name="J. Proteomics">
        <title>An enzyme assisted RP-RPLC approach for in-depth analysis of human liver phosphoproteome.</title>
        <authorList>
            <person name="Bian Y."/>
            <person name="Song C."/>
            <person name="Cheng K."/>
            <person name="Dong M."/>
            <person name="Wang F."/>
            <person name="Huang J."/>
            <person name="Sun D."/>
            <person name="Wang L."/>
            <person name="Ye M."/>
            <person name="Zou H."/>
        </authorList>
    </citation>
    <scope>IDENTIFICATION BY MASS SPECTROMETRY [LARGE SCALE ANALYSIS]</scope>
    <source>
        <tissue>Liver</tissue>
    </source>
</reference>
<reference key="18">
    <citation type="journal article" date="1992" name="Hum. Mutat.">
        <title>Human hepatic lipase mutations and polymorphisms.</title>
        <authorList>
            <person name="Hegele R.A."/>
            <person name="Tu L."/>
            <person name="Connelly P.W."/>
        </authorList>
    </citation>
    <scope>VARIANTS HL DEFICIENCY PHE-289 AND MET-405</scope>
</reference>
<reference key="19">
    <citation type="journal article" date="1991" name="Curr. Opin. Lipidol.">
        <title>Genetic variants affecting human lipoprotein and hepatic lipases.</title>
        <authorList>
            <person name="Hayden M.R."/>
            <person name="Ma Y."/>
            <person name="Brunzell J."/>
            <person name="Henderson H.E."/>
        </authorList>
    </citation>
    <scope>REVIEW ON POLYMORPHISM</scope>
</reference>
<reference key="20">
    <citation type="journal article" date="1999" name="Nat. Genet.">
        <title>Characterization of single-nucleotide polymorphisms in coding regions of human genes.</title>
        <authorList>
            <person name="Cargill M."/>
            <person name="Altshuler D."/>
            <person name="Ireland J."/>
            <person name="Sklar P."/>
            <person name="Ardlie K."/>
            <person name="Patil N."/>
            <person name="Shaw N."/>
            <person name="Lane C.R."/>
            <person name="Lim E.P."/>
            <person name="Kalyanaraman N."/>
            <person name="Nemesh J."/>
            <person name="Ziaugra L."/>
            <person name="Friedland L."/>
            <person name="Rolfe A."/>
            <person name="Warrington J."/>
            <person name="Lipshutz R."/>
            <person name="Daley G.Q."/>
            <person name="Lander E.S."/>
        </authorList>
    </citation>
    <scope>VARIANTS MET-95; SER-215 AND ASN-440</scope>
</reference>
<reference key="21">
    <citation type="journal article" date="1999" name="Nat. Genet.">
        <authorList>
            <person name="Cargill M."/>
            <person name="Altshuler D."/>
            <person name="Ireland J."/>
            <person name="Sklar P."/>
            <person name="Ardlie K."/>
            <person name="Patil N."/>
            <person name="Shaw N."/>
            <person name="Lane C.R."/>
            <person name="Lim E.P."/>
            <person name="Kalyanaraman N."/>
            <person name="Nemesh J."/>
            <person name="Ziaugra L."/>
            <person name="Friedland L."/>
            <person name="Rolfe A."/>
            <person name="Warrington J."/>
            <person name="Lipshutz R."/>
            <person name="Daley G.Q."/>
            <person name="Lander E.S."/>
        </authorList>
    </citation>
    <scope>ERRATUM OF PUBMED:10391209</scope>
</reference>
<reference key="22">
    <citation type="journal article" date="2003" name="Hum. Mol. Genet.">
        <title>Association of extreme blood lipid profile phenotypic variation with 11 reverse cholesterol transport genes and 10 non-genetic cardiovascular disease risk factors.</title>
        <authorList>
            <person name="Morabia A."/>
            <person name="Cayanis E."/>
            <person name="Costanza M.C."/>
            <person name="Ross B.M."/>
            <person name="Flaherty M.S."/>
            <person name="Alvin G.B."/>
            <person name="Das K."/>
            <person name="Gilliam T.C."/>
        </authorList>
    </citation>
    <scope>VARIANTS MET-95; SER-215; PHE-289; ILE-342; LEU-356; MET-405 AND ALA-409</scope>
</reference>
<sequence>MDTSPLCFSILLVLCIFIQSSALGQSLKPEPFGRRAQAVETNKTLHEMKTRFLLFGETNQGCQIRINHPDTLQECGFNSSLPLVMIIHGWSVDGVLENWIWQMVAALKSQPAQPVNVGLVDWITLAHDHYTIAVRNTRLVGKEVAALLRWLEESVQLSRSHVHLIGYSLGAHVSGFAGSSIGGTHKIGRITGLDAAGPLFEGSAPSNRLSPDDANFVDAIHTFTREHMGLSVGIKQPIGHYDFYPNGGSFQPGCHFLELYRHIAQHGFNAITQTIKCSHERSVHLFIDSLLHAGTQSMAYPCGDMNSFSQGLCLSCKKGRCNTLGYHVRQEPRSKSKRLFLVTRAQSPFKVYHYQFKIQFINQTETPIQTTFTMSLLGTKEKMQKIPITLGKGIASNKTYSFLITLDVDIGELIMIKFKWENSAVWANVWDTVQTIIPWSTGPRHSGLVLKTIRVKAGETQQRMTFCSENTDDLLLRPTQEKIFVKCEIKSKTSKRKIR</sequence>